<evidence type="ECO:0000255" key="1">
    <source>
        <dbReference type="HAMAP-Rule" id="MF_01865"/>
    </source>
</evidence>
<evidence type="ECO:0000255" key="2">
    <source>
        <dbReference type="PROSITE-ProRule" id="PRU01266"/>
    </source>
</evidence>
<organism>
    <name type="scientific">Thermus thermophilus (strain ATCC 27634 / DSM 579 / HB8)</name>
    <dbReference type="NCBI Taxonomy" id="300852"/>
    <lineage>
        <taxon>Bacteria</taxon>
        <taxon>Thermotogati</taxon>
        <taxon>Deinococcota</taxon>
        <taxon>Deinococci</taxon>
        <taxon>Thermales</taxon>
        <taxon>Thermaceae</taxon>
        <taxon>Thermus</taxon>
    </lineage>
</organism>
<keyword id="KW-0004">4Fe-4S</keyword>
<keyword id="KW-0963">Cytoplasm</keyword>
<keyword id="KW-0408">Iron</keyword>
<keyword id="KW-0411">Iron-sulfur</keyword>
<keyword id="KW-0479">Metal-binding</keyword>
<keyword id="KW-1185">Reference proteome</keyword>
<keyword id="KW-0949">S-adenosyl-L-methionine</keyword>
<keyword id="KW-0808">Transferase</keyword>
<feature type="chain" id="PRO_0000375056" description="Ribosomal protein uS12 methylthiotransferase RimO">
    <location>
        <begin position="1"/>
        <end position="434"/>
    </location>
</feature>
<feature type="domain" description="MTTase N-terminal" evidence="1">
    <location>
        <begin position="2"/>
        <end position="112"/>
    </location>
</feature>
<feature type="domain" description="Radical SAM core" evidence="2">
    <location>
        <begin position="128"/>
        <end position="365"/>
    </location>
</feature>
<feature type="domain" description="TRAM" evidence="1">
    <location>
        <begin position="368"/>
        <end position="434"/>
    </location>
</feature>
<feature type="binding site" evidence="1">
    <location>
        <position position="11"/>
    </location>
    <ligand>
        <name>[4Fe-4S] cluster</name>
        <dbReference type="ChEBI" id="CHEBI:49883"/>
        <label>1</label>
    </ligand>
</feature>
<feature type="binding site" evidence="1">
    <location>
        <position position="47"/>
    </location>
    <ligand>
        <name>[4Fe-4S] cluster</name>
        <dbReference type="ChEBI" id="CHEBI:49883"/>
        <label>1</label>
    </ligand>
</feature>
<feature type="binding site" evidence="1">
    <location>
        <position position="76"/>
    </location>
    <ligand>
        <name>[4Fe-4S] cluster</name>
        <dbReference type="ChEBI" id="CHEBI:49883"/>
        <label>1</label>
    </ligand>
</feature>
<feature type="binding site" evidence="1">
    <location>
        <position position="142"/>
    </location>
    <ligand>
        <name>[4Fe-4S] cluster</name>
        <dbReference type="ChEBI" id="CHEBI:49883"/>
        <label>2</label>
        <note>4Fe-4S-S-AdoMet</note>
    </ligand>
</feature>
<feature type="binding site" evidence="1">
    <location>
        <position position="146"/>
    </location>
    <ligand>
        <name>[4Fe-4S] cluster</name>
        <dbReference type="ChEBI" id="CHEBI:49883"/>
        <label>2</label>
        <note>4Fe-4S-S-AdoMet</note>
    </ligand>
</feature>
<feature type="binding site" evidence="1">
    <location>
        <position position="149"/>
    </location>
    <ligand>
        <name>[4Fe-4S] cluster</name>
        <dbReference type="ChEBI" id="CHEBI:49883"/>
        <label>2</label>
        <note>4Fe-4S-S-AdoMet</note>
    </ligand>
</feature>
<accession>Q5SJ39</accession>
<sequence length="434" mass="48283">MAKIGFVSLGCPKALVDSEQILSRLKALGYETSPSYEEAELVIVNTCGFINEAVEESLEVIGEALKENGKVVVTGCLGARPEKIRERHPQVLAITGPGEVERVLEAVQVVLPAPRDPFLDLIPPQVKLTPRHYAYVKLSEGCDHRCSFCIIPKLRGRLRSRDAADVLAEAARLVATGTKELLLVAQDLSAYGVDLGHRESLWGDRPVRAELKDLLAHMAELGAWIRLHYVYPYPHVKDLLPLMAEGKVLPYLDVPLQHASPRILRLMRRPGGYESHLKALKAWREVVPELALRSTFIVGFPGETEEDFQILLDFLEEAELDRVGVFAYSPVEGAEANRLPDPVPEEVKEERKARLLELQARVSLRKNQRFVGKTLEVLVDELPEPGLAVGRTYRDSPGIDGVVYVETDGTVRVGERIPVRILRADTYDLHGVQA</sequence>
<gene>
    <name evidence="1" type="primary">rimO</name>
    <name type="ordered locus">TTHA1175</name>
</gene>
<dbReference type="EC" id="2.8.4.4" evidence="1"/>
<dbReference type="EMBL" id="AP008226">
    <property type="protein sequence ID" value="BAD70998.1"/>
    <property type="molecule type" value="Genomic_DNA"/>
</dbReference>
<dbReference type="RefSeq" id="WP_011228491.1">
    <property type="nucleotide sequence ID" value="NC_006461.1"/>
</dbReference>
<dbReference type="RefSeq" id="YP_144441.1">
    <property type="nucleotide sequence ID" value="NC_006461.1"/>
</dbReference>
<dbReference type="SMR" id="Q5SJ39"/>
<dbReference type="EnsemblBacteria" id="BAD70998">
    <property type="protein sequence ID" value="BAD70998"/>
    <property type="gene ID" value="BAD70998"/>
</dbReference>
<dbReference type="GeneID" id="3169774"/>
<dbReference type="KEGG" id="ttj:TTHA1175"/>
<dbReference type="PATRIC" id="fig|300852.9.peg.1155"/>
<dbReference type="eggNOG" id="COG0621">
    <property type="taxonomic scope" value="Bacteria"/>
</dbReference>
<dbReference type="HOGENOM" id="CLU_018697_0_0_0"/>
<dbReference type="PhylomeDB" id="Q5SJ39"/>
<dbReference type="Proteomes" id="UP000000532">
    <property type="component" value="Chromosome"/>
</dbReference>
<dbReference type="GO" id="GO:0005829">
    <property type="term" value="C:cytosol"/>
    <property type="evidence" value="ECO:0007669"/>
    <property type="project" value="TreeGrafter"/>
</dbReference>
<dbReference type="GO" id="GO:0051539">
    <property type="term" value="F:4 iron, 4 sulfur cluster binding"/>
    <property type="evidence" value="ECO:0007669"/>
    <property type="project" value="UniProtKB-UniRule"/>
</dbReference>
<dbReference type="GO" id="GO:0035599">
    <property type="term" value="F:aspartic acid methylthiotransferase activity"/>
    <property type="evidence" value="ECO:0007669"/>
    <property type="project" value="TreeGrafter"/>
</dbReference>
<dbReference type="GO" id="GO:0046872">
    <property type="term" value="F:metal ion binding"/>
    <property type="evidence" value="ECO:0007669"/>
    <property type="project" value="UniProtKB-KW"/>
</dbReference>
<dbReference type="GO" id="GO:0103039">
    <property type="term" value="F:protein methylthiotransferase activity"/>
    <property type="evidence" value="ECO:0007669"/>
    <property type="project" value="UniProtKB-EC"/>
</dbReference>
<dbReference type="GO" id="GO:0006400">
    <property type="term" value="P:tRNA modification"/>
    <property type="evidence" value="ECO:0007669"/>
    <property type="project" value="InterPro"/>
</dbReference>
<dbReference type="CDD" id="cd01335">
    <property type="entry name" value="Radical_SAM"/>
    <property type="match status" value="1"/>
</dbReference>
<dbReference type="FunFam" id="3.40.50.12160:FF:000002">
    <property type="entry name" value="Ribosomal protein S12 methylthiotransferase RimO"/>
    <property type="match status" value="1"/>
</dbReference>
<dbReference type="FunFam" id="3.80.30.20:FF:000001">
    <property type="entry name" value="tRNA-2-methylthio-N(6)-dimethylallyladenosine synthase 2"/>
    <property type="match status" value="1"/>
</dbReference>
<dbReference type="Gene3D" id="3.40.50.12160">
    <property type="entry name" value="Methylthiotransferase, N-terminal domain"/>
    <property type="match status" value="1"/>
</dbReference>
<dbReference type="Gene3D" id="2.40.50.140">
    <property type="entry name" value="Nucleic acid-binding proteins"/>
    <property type="match status" value="1"/>
</dbReference>
<dbReference type="Gene3D" id="3.80.30.20">
    <property type="entry name" value="tm_1862 like domain"/>
    <property type="match status" value="1"/>
</dbReference>
<dbReference type="HAMAP" id="MF_01865">
    <property type="entry name" value="MTTase_RimO"/>
    <property type="match status" value="1"/>
</dbReference>
<dbReference type="InterPro" id="IPR006638">
    <property type="entry name" value="Elp3/MiaA/NifB-like_rSAM"/>
</dbReference>
<dbReference type="InterPro" id="IPR005839">
    <property type="entry name" value="Methylthiotransferase"/>
</dbReference>
<dbReference type="InterPro" id="IPR020612">
    <property type="entry name" value="Methylthiotransferase_CS"/>
</dbReference>
<dbReference type="InterPro" id="IPR013848">
    <property type="entry name" value="Methylthiotransferase_N"/>
</dbReference>
<dbReference type="InterPro" id="IPR038135">
    <property type="entry name" value="Methylthiotransferase_N_sf"/>
</dbReference>
<dbReference type="InterPro" id="IPR012340">
    <property type="entry name" value="NA-bd_OB-fold"/>
</dbReference>
<dbReference type="InterPro" id="IPR005840">
    <property type="entry name" value="Ribosomal_uS12_MeSTrfase_RimO"/>
</dbReference>
<dbReference type="InterPro" id="IPR007197">
    <property type="entry name" value="rSAM"/>
</dbReference>
<dbReference type="InterPro" id="IPR023404">
    <property type="entry name" value="rSAM_horseshoe"/>
</dbReference>
<dbReference type="InterPro" id="IPR002792">
    <property type="entry name" value="TRAM_dom"/>
</dbReference>
<dbReference type="NCBIfam" id="TIGR01125">
    <property type="entry name" value="30S ribosomal protein S12 methylthiotransferase RimO"/>
    <property type="match status" value="1"/>
</dbReference>
<dbReference type="NCBIfam" id="TIGR00089">
    <property type="entry name" value="MiaB/RimO family radical SAM methylthiotransferase"/>
    <property type="match status" value="1"/>
</dbReference>
<dbReference type="PANTHER" id="PTHR43837">
    <property type="entry name" value="RIBOSOMAL PROTEIN S12 METHYLTHIOTRANSFERASE RIMO"/>
    <property type="match status" value="1"/>
</dbReference>
<dbReference type="PANTHER" id="PTHR43837:SF1">
    <property type="entry name" value="RIBOSOMAL PROTEIN US12 METHYLTHIOTRANSFERASE RIMO"/>
    <property type="match status" value="1"/>
</dbReference>
<dbReference type="Pfam" id="PF04055">
    <property type="entry name" value="Radical_SAM"/>
    <property type="match status" value="1"/>
</dbReference>
<dbReference type="Pfam" id="PF18693">
    <property type="entry name" value="TRAM_2"/>
    <property type="match status" value="1"/>
</dbReference>
<dbReference type="Pfam" id="PF00919">
    <property type="entry name" value="UPF0004"/>
    <property type="match status" value="1"/>
</dbReference>
<dbReference type="SFLD" id="SFLDG01082">
    <property type="entry name" value="B12-binding_domain_containing"/>
    <property type="match status" value="1"/>
</dbReference>
<dbReference type="SFLD" id="SFLDG01061">
    <property type="entry name" value="methylthiotransferase"/>
    <property type="match status" value="1"/>
</dbReference>
<dbReference type="SFLD" id="SFLDF00274">
    <property type="entry name" value="ribosomal_protein_S12_methylth"/>
    <property type="match status" value="1"/>
</dbReference>
<dbReference type="SMART" id="SM00729">
    <property type="entry name" value="Elp3"/>
    <property type="match status" value="1"/>
</dbReference>
<dbReference type="SUPFAM" id="SSF102114">
    <property type="entry name" value="Radical SAM enzymes"/>
    <property type="match status" value="1"/>
</dbReference>
<dbReference type="PROSITE" id="PS51449">
    <property type="entry name" value="MTTASE_N"/>
    <property type="match status" value="1"/>
</dbReference>
<dbReference type="PROSITE" id="PS01278">
    <property type="entry name" value="MTTASE_RADICAL"/>
    <property type="match status" value="1"/>
</dbReference>
<dbReference type="PROSITE" id="PS51918">
    <property type="entry name" value="RADICAL_SAM"/>
    <property type="match status" value="1"/>
</dbReference>
<dbReference type="PROSITE" id="PS50926">
    <property type="entry name" value="TRAM"/>
    <property type="match status" value="1"/>
</dbReference>
<proteinExistence type="inferred from homology"/>
<reference key="1">
    <citation type="submission" date="2004-11" db="EMBL/GenBank/DDBJ databases">
        <title>Complete genome sequence of Thermus thermophilus HB8.</title>
        <authorList>
            <person name="Masui R."/>
            <person name="Kurokawa K."/>
            <person name="Nakagawa N."/>
            <person name="Tokunaga F."/>
            <person name="Koyama Y."/>
            <person name="Shibata T."/>
            <person name="Oshima T."/>
            <person name="Yokoyama S."/>
            <person name="Yasunaga T."/>
            <person name="Kuramitsu S."/>
        </authorList>
    </citation>
    <scope>NUCLEOTIDE SEQUENCE [LARGE SCALE GENOMIC DNA]</scope>
    <source>
        <strain>ATCC 27634 / DSM 579 / HB8</strain>
    </source>
</reference>
<comment type="function">
    <text evidence="1">Catalyzes the methylthiolation of an aspartic acid residue of ribosomal protein uS12.</text>
</comment>
<comment type="catalytic activity">
    <reaction evidence="1">
        <text>L-aspartate(89)-[ribosomal protein uS12]-hydrogen + (sulfur carrier)-SH + AH2 + 2 S-adenosyl-L-methionine = 3-methylsulfanyl-L-aspartate(89)-[ribosomal protein uS12]-hydrogen + (sulfur carrier)-H + 5'-deoxyadenosine + L-methionine + A + S-adenosyl-L-homocysteine + 2 H(+)</text>
        <dbReference type="Rhea" id="RHEA:37087"/>
        <dbReference type="Rhea" id="RHEA-COMP:10460"/>
        <dbReference type="Rhea" id="RHEA-COMP:10461"/>
        <dbReference type="Rhea" id="RHEA-COMP:14737"/>
        <dbReference type="Rhea" id="RHEA-COMP:14739"/>
        <dbReference type="ChEBI" id="CHEBI:13193"/>
        <dbReference type="ChEBI" id="CHEBI:15378"/>
        <dbReference type="ChEBI" id="CHEBI:17319"/>
        <dbReference type="ChEBI" id="CHEBI:17499"/>
        <dbReference type="ChEBI" id="CHEBI:29917"/>
        <dbReference type="ChEBI" id="CHEBI:29961"/>
        <dbReference type="ChEBI" id="CHEBI:57844"/>
        <dbReference type="ChEBI" id="CHEBI:57856"/>
        <dbReference type="ChEBI" id="CHEBI:59789"/>
        <dbReference type="ChEBI" id="CHEBI:64428"/>
        <dbReference type="ChEBI" id="CHEBI:73599"/>
        <dbReference type="EC" id="2.8.4.4"/>
    </reaction>
</comment>
<comment type="cofactor">
    <cofactor evidence="1">
        <name>[4Fe-4S] cluster</name>
        <dbReference type="ChEBI" id="CHEBI:49883"/>
    </cofactor>
    <text evidence="1">Binds 2 [4Fe-4S] clusters. One cluster is coordinated with 3 cysteines and an exchangeable S-adenosyl-L-methionine.</text>
</comment>
<comment type="subcellular location">
    <subcellularLocation>
        <location evidence="1">Cytoplasm</location>
    </subcellularLocation>
</comment>
<comment type="similarity">
    <text evidence="1">Belongs to the methylthiotransferase family. RimO subfamily.</text>
</comment>
<protein>
    <recommendedName>
        <fullName evidence="1">Ribosomal protein uS12 methylthiotransferase RimO</fullName>
        <shortName evidence="1">uS12 MTTase</shortName>
        <shortName evidence="1">uS12 methylthiotransferase</shortName>
        <ecNumber evidence="1">2.8.4.4</ecNumber>
    </recommendedName>
    <alternativeName>
        <fullName evidence="1">Ribosomal protein uS12 (aspartate-C(3))-methylthiotransferase</fullName>
    </alternativeName>
    <alternativeName>
        <fullName evidence="1">Ribosome maturation factor RimO</fullName>
    </alternativeName>
</protein>
<name>RIMO_THET8</name>